<sequence length="1647" mass="185617">MSVQAYTNTPNLPNLIHSESITNSPVFIPNLRSKSDNKHRLNTSEELPFTKKRRATKHFLKMEVSAKISEPPSSKSVEFGRHLNMRHDFSELLEQPLTTSKTRVFKSFNEKLKGKPQLVKSDKGVLPLNKQSDILNSYERVLSNASVDSALDKKAEVDIIPFDKSVMEPKNITFNDKSGLTKFGNSNSYETTYSDSSNYHTSTDSSQYNDQDDHVYDDTNDGTDDDINNNEYKDDESSSGSESYERDEDVDEEEEEDDDENNDEGDDEDENENDELRSENGSPNPSAAVINEQENMNMSGIEEYDETNLLNELGRIRRGNQFQSLASSILSSGNLENSDDEDVSLGPQTYRFNSSFHPFRSAFSAPGVQFGRLLEGIKDFSDPTVQMLSLQELSEAFAMSTEDMLVGLFSTDSYIAAFSEILSGRNYDFGEVSIQLMLSCTTCVSNMMEALPLCMAKIAYSPIVRILCERMFDMQYIDIAEQALGVLERLSKDFGICILEHRGMLAALQYFDFFYTTVQRTAISLAANCCKFLDESNASAAEEIIPLLSNILQSSDTIVVSKAYSCLETIIESLKTSPNIIETIISEDLITTIVNALTNSTSQNKSMHLQVQLLHIISSLCQSSSALILPFLNHNLPDVMYEMLCGIPPSDTSHQADMITMQSLYYCPIELIENLLRAITSLLPKNTSNLSDEFNTKLYRLNSILLTVVMDIYFIVPLHDIRSLAVTTALKMLCSIRENNLDGLVCSLPLSSFIASILNSRKSDNFLKRDALEMCLFLLEALPNVYSSLFIREGVVQEVGFLVRSTNADMKKIKLSISFSQNKSAARHEELKNLSTLKSLAKEFLSNYKEENLENSTLVQLKQLSKHLLSETKQDESFSELAKIFQEGSNITSHELLHSGLIHNLLLSLKKFGSSSLRTFLLAMNTCDEREVLEFGNGPLVSLIFCLQNLLSTVENFQLSTLPPDTENAVDHVFSRQFKLRLMALPGSRIRPPFRSLVVSINGLATIRTLDNYLHSRISVRNETGRRFSILREAGSLRESMSGSSRNSSGDYTDSMSQDAPNHTTEPSERRDSSTSSHFEEHFVFSLMGKKVPRNKTIFRILYEYIQLSDDHTLDDFWKTPVPIFYGEPDCIHNDMKGELNYENETEGFSINIREILDLLSILYYGIRDVHTLFPDKHFRGNIENILTDFSNWKLSAKLNRQLEEQQLVVHGCLPSWCISLTSAYPFLVPFETRYLLLQSTAFGLSRSVSFLLSRNPELSKNESSSILQFVSLHRQKIRISRKKIFNYALHLLATYAASENILEIEYEDEVGSGLGPTLEFYTSVSKEFTLNSLDIWRNDQPNSKFVYQASGLFPSPIPLLGSSPENERKISLFFALGQFVARSIYDSRIISIQFNPLFFARNIPLTISSVAKVDKGLANSLRYLEKLIPGKNPTNAETDIKLEDLHLDFTLPGFPSIELIPDGASTPVTTFNVSDYLNYVIDYTVGKGVQQQLEAFQNGFSSVFPYTSLQVLTEHELVTLFGTVDEDWSYATLMKSIVADHGYTMESPTIQRLLTLMSQMNFQEQRDFLQFITGSRKLPIGGFAGLNPPLTVVRRLNEPPYVPDDYLPSVMTCVNYLKLPEYSSSEVLGSRLSKAILEGQGSFHLS</sequence>
<name>YDE1_SCHPO</name>
<keyword id="KW-1185">Reference proteome</keyword>
<keyword id="KW-0808">Transferase</keyword>
<keyword id="KW-0833">Ubl conjugation pathway</keyword>
<dbReference type="EC" id="2.3.2.26"/>
<dbReference type="EMBL" id="CU329670">
    <property type="protein sequence ID" value="CAA22594.2"/>
    <property type="molecule type" value="Genomic_DNA"/>
</dbReference>
<dbReference type="PIR" id="T37568">
    <property type="entry name" value="T37568"/>
</dbReference>
<dbReference type="PIR" id="T38617">
    <property type="entry name" value="T38617"/>
</dbReference>
<dbReference type="RefSeq" id="NP_594633.2">
    <property type="nucleotide sequence ID" value="NM_001020061.2"/>
</dbReference>
<dbReference type="SMR" id="Q10435"/>
<dbReference type="BioGRID" id="278072">
    <property type="interactions" value="51"/>
</dbReference>
<dbReference type="FunCoup" id="Q10435">
    <property type="interactions" value="746"/>
</dbReference>
<dbReference type="STRING" id="284812.Q10435"/>
<dbReference type="iPTMnet" id="Q10435"/>
<dbReference type="PaxDb" id="4896-SPAC12B10.01c.1"/>
<dbReference type="EnsemblFungi" id="SPAC12B10.01c.1">
    <property type="protein sequence ID" value="SPAC12B10.01c.1:pep"/>
    <property type="gene ID" value="SPAC12B10.01c"/>
</dbReference>
<dbReference type="KEGG" id="spo:2541575"/>
<dbReference type="PomBase" id="SPAC12B10.01c"/>
<dbReference type="VEuPathDB" id="FungiDB:SPAC12B10.01c"/>
<dbReference type="eggNOG" id="KOG0168">
    <property type="taxonomic scope" value="Eukaryota"/>
</dbReference>
<dbReference type="eggNOG" id="KOG0170">
    <property type="taxonomic scope" value="Eukaryota"/>
</dbReference>
<dbReference type="HOGENOM" id="CLU_000366_1_1_1"/>
<dbReference type="InParanoid" id="Q10435"/>
<dbReference type="OMA" id="FFTIHAQ"/>
<dbReference type="PhylomeDB" id="Q10435"/>
<dbReference type="Reactome" id="R-SPO-983168">
    <property type="pathway name" value="Antigen processing: Ubiquitination &amp; Proteasome degradation"/>
</dbReference>
<dbReference type="PRO" id="PR:Q10435"/>
<dbReference type="Proteomes" id="UP000002485">
    <property type="component" value="Chromosome I"/>
</dbReference>
<dbReference type="GO" id="GO:0005829">
    <property type="term" value="C:cytosol"/>
    <property type="evidence" value="ECO:0007005"/>
    <property type="project" value="PomBase"/>
</dbReference>
<dbReference type="GO" id="GO:0005741">
    <property type="term" value="C:mitochondrial outer membrane"/>
    <property type="evidence" value="ECO:0000314"/>
    <property type="project" value="PomBase"/>
</dbReference>
<dbReference type="GO" id="GO:0016607">
    <property type="term" value="C:nuclear speck"/>
    <property type="evidence" value="ECO:0000318"/>
    <property type="project" value="GO_Central"/>
</dbReference>
<dbReference type="GO" id="GO:0005634">
    <property type="term" value="C:nucleus"/>
    <property type="evidence" value="ECO:0007005"/>
    <property type="project" value="PomBase"/>
</dbReference>
<dbReference type="GO" id="GO:0061630">
    <property type="term" value="F:ubiquitin protein ligase activity"/>
    <property type="evidence" value="ECO:0000269"/>
    <property type="project" value="PomBase"/>
</dbReference>
<dbReference type="GO" id="GO:0043161">
    <property type="term" value="P:proteasome-mediated ubiquitin-dependent protein catabolic process"/>
    <property type="evidence" value="ECO:0000318"/>
    <property type="project" value="GO_Central"/>
</dbReference>
<dbReference type="GO" id="GO:0000209">
    <property type="term" value="P:protein polyubiquitination"/>
    <property type="evidence" value="ECO:0000318"/>
    <property type="project" value="GO_Central"/>
</dbReference>
<dbReference type="CDD" id="cd00078">
    <property type="entry name" value="HECTc"/>
    <property type="match status" value="1"/>
</dbReference>
<dbReference type="Gene3D" id="3.30.2160.10">
    <property type="entry name" value="Hect, E3 ligase catalytic domain"/>
    <property type="match status" value="1"/>
</dbReference>
<dbReference type="Gene3D" id="3.30.2410.10">
    <property type="entry name" value="Hect, E3 ligase catalytic domain"/>
    <property type="match status" value="1"/>
</dbReference>
<dbReference type="Gene3D" id="3.90.1750.10">
    <property type="entry name" value="Hect, E3 ligase catalytic domains"/>
    <property type="match status" value="1"/>
</dbReference>
<dbReference type="Gene3D" id="1.25.10.10">
    <property type="entry name" value="Leucine-rich Repeat Variant"/>
    <property type="match status" value="1"/>
</dbReference>
<dbReference type="InterPro" id="IPR011989">
    <property type="entry name" value="ARM-like"/>
</dbReference>
<dbReference type="InterPro" id="IPR016024">
    <property type="entry name" value="ARM-type_fold"/>
</dbReference>
<dbReference type="InterPro" id="IPR000569">
    <property type="entry name" value="HECT_dom"/>
</dbReference>
<dbReference type="InterPro" id="IPR035983">
    <property type="entry name" value="Hect_E3_ubiquitin_ligase"/>
</dbReference>
<dbReference type="InterPro" id="IPR045322">
    <property type="entry name" value="HECTD1/TRIP12-like"/>
</dbReference>
<dbReference type="PANTHER" id="PTHR45670:SF1">
    <property type="entry name" value="E3 UBIQUITIN-PROTEIN LIGASE HECTD1"/>
    <property type="match status" value="1"/>
</dbReference>
<dbReference type="PANTHER" id="PTHR45670">
    <property type="entry name" value="E3 UBIQUITIN-PROTEIN LIGASE TRIP12"/>
    <property type="match status" value="1"/>
</dbReference>
<dbReference type="Pfam" id="PF00632">
    <property type="entry name" value="HECT"/>
    <property type="match status" value="1"/>
</dbReference>
<dbReference type="SMART" id="SM00119">
    <property type="entry name" value="HECTc"/>
    <property type="match status" value="1"/>
</dbReference>
<dbReference type="SUPFAM" id="SSF48371">
    <property type="entry name" value="ARM repeat"/>
    <property type="match status" value="1"/>
</dbReference>
<dbReference type="SUPFAM" id="SSF56204">
    <property type="entry name" value="Hect, E3 ligase catalytic domain"/>
    <property type="match status" value="1"/>
</dbReference>
<dbReference type="PROSITE" id="PS50237">
    <property type="entry name" value="HECT"/>
    <property type="match status" value="1"/>
</dbReference>
<accession>Q10435</accession>
<accession>O14101</accession>
<protein>
    <recommendedName>
        <fullName>Probable ubiquitin fusion degradation protein C12B10.01c</fullName>
    </recommendedName>
    <alternativeName>
        <fullName>HECT-type E3 ubiquitin transferase C12B10.01c</fullName>
        <ecNumber>2.3.2.26</ecNumber>
    </alternativeName>
</protein>
<evidence type="ECO:0000250" key="1"/>
<evidence type="ECO:0000255" key="2">
    <source>
        <dbReference type="PROSITE-ProRule" id="PRU00104"/>
    </source>
</evidence>
<evidence type="ECO:0000256" key="3">
    <source>
        <dbReference type="SAM" id="MobiDB-lite"/>
    </source>
</evidence>
<evidence type="ECO:0000305" key="4"/>
<gene>
    <name type="ORF">SPAC12B10.01c</name>
    <name type="ORF">SPAC31F12.02c</name>
    <name type="ORF">SPAC637.15c</name>
</gene>
<comment type="function">
    <text evidence="1">E3 ubiquitin-protein ligase which accepts ubiquitin from an E2 ubiquitin-conjugating enzyme in the form of a thioester and then directly transfers the ubiquitin to targeted substrates.</text>
</comment>
<comment type="catalytic activity">
    <reaction>
        <text>S-ubiquitinyl-[E2 ubiquitin-conjugating enzyme]-L-cysteine + [acceptor protein]-L-lysine = [E2 ubiquitin-conjugating enzyme]-L-cysteine + N(6)-ubiquitinyl-[acceptor protein]-L-lysine.</text>
        <dbReference type="EC" id="2.3.2.26"/>
    </reaction>
</comment>
<comment type="miscellaneous">
    <text>A cysteine residue is required for ubiquitin-thioester formation.</text>
</comment>
<comment type="similarity">
    <text evidence="4">Belongs to the UPL family. K-HECT subfamily.</text>
</comment>
<proteinExistence type="inferred from homology"/>
<organism>
    <name type="scientific">Schizosaccharomyces pombe (strain 972 / ATCC 24843)</name>
    <name type="common">Fission yeast</name>
    <dbReference type="NCBI Taxonomy" id="284812"/>
    <lineage>
        <taxon>Eukaryota</taxon>
        <taxon>Fungi</taxon>
        <taxon>Dikarya</taxon>
        <taxon>Ascomycota</taxon>
        <taxon>Taphrinomycotina</taxon>
        <taxon>Schizosaccharomycetes</taxon>
        <taxon>Schizosaccharomycetales</taxon>
        <taxon>Schizosaccharomycetaceae</taxon>
        <taxon>Schizosaccharomyces</taxon>
    </lineage>
</organism>
<feature type="chain" id="PRO_0000194999" description="Probable ubiquitin fusion degradation protein C12B10.01c">
    <location>
        <begin position="1"/>
        <end position="1647"/>
    </location>
</feature>
<feature type="domain" description="HECT" evidence="2">
    <location>
        <begin position="1294"/>
        <end position="1647"/>
    </location>
</feature>
<feature type="region of interest" description="Disordered" evidence="3">
    <location>
        <begin position="192"/>
        <end position="288"/>
    </location>
</feature>
<feature type="region of interest" description="Disordered" evidence="3">
    <location>
        <begin position="1039"/>
        <end position="1076"/>
    </location>
</feature>
<feature type="region of interest" description="K-box">
    <location>
        <begin position="1183"/>
        <end position="1257"/>
    </location>
</feature>
<feature type="compositionally biased region" description="Polar residues" evidence="3">
    <location>
        <begin position="192"/>
        <end position="209"/>
    </location>
</feature>
<feature type="compositionally biased region" description="Acidic residues" evidence="3">
    <location>
        <begin position="218"/>
        <end position="228"/>
    </location>
</feature>
<feature type="compositionally biased region" description="Acidic residues" evidence="3">
    <location>
        <begin position="245"/>
        <end position="273"/>
    </location>
</feature>
<feature type="compositionally biased region" description="Low complexity" evidence="3">
    <location>
        <begin position="1039"/>
        <end position="1050"/>
    </location>
</feature>
<feature type="compositionally biased region" description="Polar residues" evidence="3">
    <location>
        <begin position="1051"/>
        <end position="1065"/>
    </location>
</feature>
<feature type="compositionally biased region" description="Basic and acidic residues" evidence="3">
    <location>
        <begin position="1066"/>
        <end position="1076"/>
    </location>
</feature>
<feature type="active site" description="Glycyl thioester intermediate" evidence="2">
    <location>
        <position position="1614"/>
    </location>
</feature>
<reference key="1">
    <citation type="journal article" date="2002" name="Nature">
        <title>The genome sequence of Schizosaccharomyces pombe.</title>
        <authorList>
            <person name="Wood V."/>
            <person name="Gwilliam R."/>
            <person name="Rajandream M.A."/>
            <person name="Lyne M.H."/>
            <person name="Lyne R."/>
            <person name="Stewart A."/>
            <person name="Sgouros J.G."/>
            <person name="Peat N."/>
            <person name="Hayles J."/>
            <person name="Baker S.G."/>
            <person name="Basham D."/>
            <person name="Bowman S."/>
            <person name="Brooks K."/>
            <person name="Brown D."/>
            <person name="Brown S."/>
            <person name="Chillingworth T."/>
            <person name="Churcher C.M."/>
            <person name="Collins M."/>
            <person name="Connor R."/>
            <person name="Cronin A."/>
            <person name="Davis P."/>
            <person name="Feltwell T."/>
            <person name="Fraser A."/>
            <person name="Gentles S."/>
            <person name="Goble A."/>
            <person name="Hamlin N."/>
            <person name="Harris D.E."/>
            <person name="Hidalgo J."/>
            <person name="Hodgson G."/>
            <person name="Holroyd S."/>
            <person name="Hornsby T."/>
            <person name="Howarth S."/>
            <person name="Huckle E.J."/>
            <person name="Hunt S."/>
            <person name="Jagels K."/>
            <person name="James K.D."/>
            <person name="Jones L."/>
            <person name="Jones M."/>
            <person name="Leather S."/>
            <person name="McDonald S."/>
            <person name="McLean J."/>
            <person name="Mooney P."/>
            <person name="Moule S."/>
            <person name="Mungall K.L."/>
            <person name="Murphy L.D."/>
            <person name="Niblett D."/>
            <person name="Odell C."/>
            <person name="Oliver K."/>
            <person name="O'Neil S."/>
            <person name="Pearson D."/>
            <person name="Quail M.A."/>
            <person name="Rabbinowitsch E."/>
            <person name="Rutherford K.M."/>
            <person name="Rutter S."/>
            <person name="Saunders D."/>
            <person name="Seeger K."/>
            <person name="Sharp S."/>
            <person name="Skelton J."/>
            <person name="Simmonds M.N."/>
            <person name="Squares R."/>
            <person name="Squares S."/>
            <person name="Stevens K."/>
            <person name="Taylor K."/>
            <person name="Taylor R.G."/>
            <person name="Tivey A."/>
            <person name="Walsh S.V."/>
            <person name="Warren T."/>
            <person name="Whitehead S."/>
            <person name="Woodward J.R."/>
            <person name="Volckaert G."/>
            <person name="Aert R."/>
            <person name="Robben J."/>
            <person name="Grymonprez B."/>
            <person name="Weltjens I."/>
            <person name="Vanstreels E."/>
            <person name="Rieger M."/>
            <person name="Schaefer M."/>
            <person name="Mueller-Auer S."/>
            <person name="Gabel C."/>
            <person name="Fuchs M."/>
            <person name="Duesterhoeft A."/>
            <person name="Fritzc C."/>
            <person name="Holzer E."/>
            <person name="Moestl D."/>
            <person name="Hilbert H."/>
            <person name="Borzym K."/>
            <person name="Langer I."/>
            <person name="Beck A."/>
            <person name="Lehrach H."/>
            <person name="Reinhardt R."/>
            <person name="Pohl T.M."/>
            <person name="Eger P."/>
            <person name="Zimmermann W."/>
            <person name="Wedler H."/>
            <person name="Wambutt R."/>
            <person name="Purnelle B."/>
            <person name="Goffeau A."/>
            <person name="Cadieu E."/>
            <person name="Dreano S."/>
            <person name="Gloux S."/>
            <person name="Lelaure V."/>
            <person name="Mottier S."/>
            <person name="Galibert F."/>
            <person name="Aves S.J."/>
            <person name="Xiang Z."/>
            <person name="Hunt C."/>
            <person name="Moore K."/>
            <person name="Hurst S.M."/>
            <person name="Lucas M."/>
            <person name="Rochet M."/>
            <person name="Gaillardin C."/>
            <person name="Tallada V.A."/>
            <person name="Garzon A."/>
            <person name="Thode G."/>
            <person name="Daga R.R."/>
            <person name="Cruzado L."/>
            <person name="Jimenez J."/>
            <person name="Sanchez M."/>
            <person name="del Rey F."/>
            <person name="Benito J."/>
            <person name="Dominguez A."/>
            <person name="Revuelta J.L."/>
            <person name="Moreno S."/>
            <person name="Armstrong J."/>
            <person name="Forsburg S.L."/>
            <person name="Cerutti L."/>
            <person name="Lowe T."/>
            <person name="McCombie W.R."/>
            <person name="Paulsen I."/>
            <person name="Potashkin J."/>
            <person name="Shpakovski G.V."/>
            <person name="Ussery D."/>
            <person name="Barrell B.G."/>
            <person name="Nurse P."/>
        </authorList>
    </citation>
    <scope>NUCLEOTIDE SEQUENCE [LARGE SCALE GENOMIC DNA]</scope>
    <source>
        <strain>972 / ATCC 24843</strain>
    </source>
</reference>